<accession>Q5FNP1</accession>
<sequence length="645" mass="72520">MTDLPPHSSHHPADQGEPLVPAEKKQGVEAIREALKTIPYSPGVYRMLSEKGEVLYVGKALSLKKRVSSYIRINQLPERLRRMVSMTVSMEIVITRTEADALLLEANYIKRMKPRFNILLRDDKSYPWLMLTESHEFPQITKQRGKPVKGATYWGPFANAWAVNQTLNLVQRSFLLRSCSDAVLNSRTRPCLLYQIKRCSAPCVDRISKEDYAELVSEARQFLSGHSTELQQRLVAEMEQASQELNYERAASIRDRIRGFASIQGSSTINPTSINDADIMTIWQEAGQSCIQVFFIRGSRNNGNRAFYPAHAEEETAADVLSAFMIQFYDNKPPPPSILVNCELPEPKLVEEALSIRRGQKVEILRPQRGEKKDVVEHAALNAREALERKLAENTGQRRLLEGVAEVFGLPEIPQRIETYDNSHIMGQAPYGVMVVGGPEGFNKRAYRKYAIKGPVTPGDDFGMMREVMERRFGHRSENGERPEDWPDLLLIDGGLGQFNAVRAVLADLGVTGIPIVAIAKGPDRDAGREWFFTETKSPFQLPPRDPVLYYLQRLRDEAHRFAITTHRAGRSKGLRSSELDHVPGIGAARKKALLNHFGSAKSVRQASLEELENAPGISSSTATAIYGHFHPEWVQKTSADNRSH</sequence>
<dbReference type="EMBL" id="CP000009">
    <property type="protein sequence ID" value="AAW62006.1"/>
    <property type="molecule type" value="Genomic_DNA"/>
</dbReference>
<dbReference type="RefSeq" id="WP_011253776.1">
    <property type="nucleotide sequence ID" value="NC_006677.1"/>
</dbReference>
<dbReference type="SMR" id="Q5FNP1"/>
<dbReference type="STRING" id="290633.GOX2273"/>
<dbReference type="KEGG" id="gox:GOX2273"/>
<dbReference type="eggNOG" id="COG0322">
    <property type="taxonomic scope" value="Bacteria"/>
</dbReference>
<dbReference type="HOGENOM" id="CLU_014841_3_0_5"/>
<dbReference type="Proteomes" id="UP000006375">
    <property type="component" value="Chromosome"/>
</dbReference>
<dbReference type="GO" id="GO:0005737">
    <property type="term" value="C:cytoplasm"/>
    <property type="evidence" value="ECO:0007669"/>
    <property type="project" value="UniProtKB-SubCell"/>
</dbReference>
<dbReference type="GO" id="GO:0009380">
    <property type="term" value="C:excinuclease repair complex"/>
    <property type="evidence" value="ECO:0007669"/>
    <property type="project" value="InterPro"/>
</dbReference>
<dbReference type="GO" id="GO:0003677">
    <property type="term" value="F:DNA binding"/>
    <property type="evidence" value="ECO:0007669"/>
    <property type="project" value="UniProtKB-UniRule"/>
</dbReference>
<dbReference type="GO" id="GO:0009381">
    <property type="term" value="F:excinuclease ABC activity"/>
    <property type="evidence" value="ECO:0007669"/>
    <property type="project" value="UniProtKB-UniRule"/>
</dbReference>
<dbReference type="GO" id="GO:0006289">
    <property type="term" value="P:nucleotide-excision repair"/>
    <property type="evidence" value="ECO:0007669"/>
    <property type="project" value="UniProtKB-UniRule"/>
</dbReference>
<dbReference type="GO" id="GO:0009432">
    <property type="term" value="P:SOS response"/>
    <property type="evidence" value="ECO:0007669"/>
    <property type="project" value="UniProtKB-UniRule"/>
</dbReference>
<dbReference type="CDD" id="cd10434">
    <property type="entry name" value="GIY-YIG_UvrC_Cho"/>
    <property type="match status" value="1"/>
</dbReference>
<dbReference type="FunFam" id="3.30.420.340:FF:000001">
    <property type="entry name" value="UvrABC system protein C"/>
    <property type="match status" value="1"/>
</dbReference>
<dbReference type="FunFam" id="3.40.1440.10:FF:000001">
    <property type="entry name" value="UvrABC system protein C"/>
    <property type="match status" value="1"/>
</dbReference>
<dbReference type="Gene3D" id="1.10.150.20">
    <property type="entry name" value="5' to 3' exonuclease, C-terminal subdomain"/>
    <property type="match status" value="1"/>
</dbReference>
<dbReference type="Gene3D" id="3.40.1440.10">
    <property type="entry name" value="GIY-YIG endonuclease"/>
    <property type="match status" value="1"/>
</dbReference>
<dbReference type="Gene3D" id="4.10.860.10">
    <property type="entry name" value="UVR domain"/>
    <property type="match status" value="1"/>
</dbReference>
<dbReference type="Gene3D" id="3.30.420.340">
    <property type="entry name" value="UvrC, RNAse H endonuclease domain"/>
    <property type="match status" value="1"/>
</dbReference>
<dbReference type="HAMAP" id="MF_00203">
    <property type="entry name" value="UvrC"/>
    <property type="match status" value="1"/>
</dbReference>
<dbReference type="InterPro" id="IPR000305">
    <property type="entry name" value="GIY-YIG_endonuc"/>
</dbReference>
<dbReference type="InterPro" id="IPR035901">
    <property type="entry name" value="GIY-YIG_endonuc_sf"/>
</dbReference>
<dbReference type="InterPro" id="IPR047296">
    <property type="entry name" value="GIY-YIG_UvrC_Cho"/>
</dbReference>
<dbReference type="InterPro" id="IPR003583">
    <property type="entry name" value="Hlx-hairpin-Hlx_DNA-bd_motif"/>
</dbReference>
<dbReference type="InterPro" id="IPR010994">
    <property type="entry name" value="RuvA_2-like"/>
</dbReference>
<dbReference type="InterPro" id="IPR001943">
    <property type="entry name" value="UVR_dom"/>
</dbReference>
<dbReference type="InterPro" id="IPR036876">
    <property type="entry name" value="UVR_dom_sf"/>
</dbReference>
<dbReference type="InterPro" id="IPR050066">
    <property type="entry name" value="UvrABC_protein_C"/>
</dbReference>
<dbReference type="InterPro" id="IPR004791">
    <property type="entry name" value="UvrC"/>
</dbReference>
<dbReference type="InterPro" id="IPR001162">
    <property type="entry name" value="UvrC_RNase_H_dom"/>
</dbReference>
<dbReference type="InterPro" id="IPR038476">
    <property type="entry name" value="UvrC_RNase_H_dom_sf"/>
</dbReference>
<dbReference type="NCBIfam" id="NF001824">
    <property type="entry name" value="PRK00558.1-5"/>
    <property type="match status" value="1"/>
</dbReference>
<dbReference type="NCBIfam" id="TIGR00194">
    <property type="entry name" value="uvrC"/>
    <property type="match status" value="1"/>
</dbReference>
<dbReference type="PANTHER" id="PTHR30562:SF1">
    <property type="entry name" value="UVRABC SYSTEM PROTEIN C"/>
    <property type="match status" value="1"/>
</dbReference>
<dbReference type="PANTHER" id="PTHR30562">
    <property type="entry name" value="UVRC/OXIDOREDUCTASE"/>
    <property type="match status" value="1"/>
</dbReference>
<dbReference type="Pfam" id="PF01541">
    <property type="entry name" value="GIY-YIG"/>
    <property type="match status" value="1"/>
</dbReference>
<dbReference type="Pfam" id="PF14520">
    <property type="entry name" value="HHH_5"/>
    <property type="match status" value="1"/>
</dbReference>
<dbReference type="Pfam" id="PF02151">
    <property type="entry name" value="UVR"/>
    <property type="match status" value="1"/>
</dbReference>
<dbReference type="Pfam" id="PF22920">
    <property type="entry name" value="UvrC_RNaseH"/>
    <property type="match status" value="1"/>
</dbReference>
<dbReference type="Pfam" id="PF08459">
    <property type="entry name" value="UvrC_RNaseH_dom"/>
    <property type="match status" value="1"/>
</dbReference>
<dbReference type="SMART" id="SM00465">
    <property type="entry name" value="GIYc"/>
    <property type="match status" value="1"/>
</dbReference>
<dbReference type="SMART" id="SM00278">
    <property type="entry name" value="HhH1"/>
    <property type="match status" value="2"/>
</dbReference>
<dbReference type="SUPFAM" id="SSF46600">
    <property type="entry name" value="C-terminal UvrC-binding domain of UvrB"/>
    <property type="match status" value="1"/>
</dbReference>
<dbReference type="SUPFAM" id="SSF82771">
    <property type="entry name" value="GIY-YIG endonuclease"/>
    <property type="match status" value="1"/>
</dbReference>
<dbReference type="SUPFAM" id="SSF47781">
    <property type="entry name" value="RuvA domain 2-like"/>
    <property type="match status" value="1"/>
</dbReference>
<dbReference type="PROSITE" id="PS50164">
    <property type="entry name" value="GIY_YIG"/>
    <property type="match status" value="1"/>
</dbReference>
<dbReference type="PROSITE" id="PS50151">
    <property type="entry name" value="UVR"/>
    <property type="match status" value="1"/>
</dbReference>
<dbReference type="PROSITE" id="PS50165">
    <property type="entry name" value="UVRC"/>
    <property type="match status" value="1"/>
</dbReference>
<evidence type="ECO:0000255" key="1">
    <source>
        <dbReference type="HAMAP-Rule" id="MF_00203"/>
    </source>
</evidence>
<evidence type="ECO:0000256" key="2">
    <source>
        <dbReference type="SAM" id="MobiDB-lite"/>
    </source>
</evidence>
<name>UVRC_GLUOX</name>
<keyword id="KW-0963">Cytoplasm</keyword>
<keyword id="KW-0227">DNA damage</keyword>
<keyword id="KW-0228">DNA excision</keyword>
<keyword id="KW-0234">DNA repair</keyword>
<keyword id="KW-0267">Excision nuclease</keyword>
<keyword id="KW-1185">Reference proteome</keyword>
<keyword id="KW-0742">SOS response</keyword>
<comment type="function">
    <text evidence="1">The UvrABC repair system catalyzes the recognition and processing of DNA lesions. UvrC both incises the 5' and 3' sides of the lesion. The N-terminal half is responsible for the 3' incision and the C-terminal half is responsible for the 5' incision.</text>
</comment>
<comment type="subunit">
    <text evidence="1">Interacts with UvrB in an incision complex.</text>
</comment>
<comment type="subcellular location">
    <subcellularLocation>
        <location evidence="1">Cytoplasm</location>
    </subcellularLocation>
</comment>
<comment type="similarity">
    <text evidence="1">Belongs to the UvrC family.</text>
</comment>
<protein>
    <recommendedName>
        <fullName evidence="1">UvrABC system protein C</fullName>
        <shortName evidence="1">Protein UvrC</shortName>
    </recommendedName>
    <alternativeName>
        <fullName evidence="1">Excinuclease ABC subunit C</fullName>
    </alternativeName>
</protein>
<reference key="1">
    <citation type="journal article" date="2005" name="Nat. Biotechnol.">
        <title>Complete genome sequence of the acetic acid bacterium Gluconobacter oxydans.</title>
        <authorList>
            <person name="Prust C."/>
            <person name="Hoffmeister M."/>
            <person name="Liesegang H."/>
            <person name="Wiezer A."/>
            <person name="Fricke W.F."/>
            <person name="Ehrenreich A."/>
            <person name="Gottschalk G."/>
            <person name="Deppenmeier U."/>
        </authorList>
    </citation>
    <scope>NUCLEOTIDE SEQUENCE [LARGE SCALE GENOMIC DNA]</scope>
    <source>
        <strain>621H</strain>
    </source>
</reference>
<proteinExistence type="inferred from homology"/>
<feature type="chain" id="PRO_0000264897" description="UvrABC system protein C">
    <location>
        <begin position="1"/>
        <end position="645"/>
    </location>
</feature>
<feature type="domain" description="GIY-YIG" evidence="1">
    <location>
        <begin position="40"/>
        <end position="118"/>
    </location>
</feature>
<feature type="domain" description="UVR" evidence="1">
    <location>
        <begin position="228"/>
        <end position="263"/>
    </location>
</feature>
<feature type="region of interest" description="Disordered" evidence="2">
    <location>
        <begin position="1"/>
        <end position="20"/>
    </location>
</feature>
<gene>
    <name evidence="1" type="primary">uvrC</name>
    <name type="ordered locus">GOX2273</name>
</gene>
<organism>
    <name type="scientific">Gluconobacter oxydans (strain 621H)</name>
    <name type="common">Gluconobacter suboxydans</name>
    <dbReference type="NCBI Taxonomy" id="290633"/>
    <lineage>
        <taxon>Bacteria</taxon>
        <taxon>Pseudomonadati</taxon>
        <taxon>Pseudomonadota</taxon>
        <taxon>Alphaproteobacteria</taxon>
        <taxon>Acetobacterales</taxon>
        <taxon>Acetobacteraceae</taxon>
        <taxon>Gluconobacter</taxon>
    </lineage>
</organism>